<name>FAAA_MOUSE</name>
<reference key="1">
    <citation type="journal article" date="1992" name="Proc. Natl. Acad. Sci. U.S.A.">
        <title>Murine fumarylacetoacetate hydrolase (Fah) gene is disrupted by a neonatally lethal albino deletion that defines the hepatocyte-specific developmental regulation 1 (hsdr-1) locus.</title>
        <authorList>
            <person name="Klebig M.L."/>
            <person name="Russell L.B."/>
            <person name="Rinchik E.M."/>
        </authorList>
    </citation>
    <scope>NUCLEOTIDE SEQUENCE [MRNA]</scope>
</reference>
<reference key="2">
    <citation type="journal article" date="1992" name="Biochem. Med. Metab. Biol.">
        <title>Nucleotide sequence of a cDNA encoding murine fumarylacetoacetate hydrolase.</title>
        <authorList>
            <person name="Grompe M."/>
            <person name="Al-Dhalimy M."/>
        </authorList>
    </citation>
    <scope>NUCLEOTIDE SEQUENCE [MRNA]</scope>
    <source>
        <strain>C57BL/6J</strain>
        <tissue>Liver</tissue>
    </source>
</reference>
<reference key="3">
    <citation type="journal article" date="1992" name="Genes Dev.">
        <title>Deficiency of an enzyme of tyrosine metabolism underlies altered gene expression in newborn liver of lethal albino mice.</title>
        <authorList>
            <person name="Ruppert S."/>
            <person name="Kelsey G."/>
            <person name="Schedl A."/>
            <person name="Schmid E."/>
            <person name="Thies E."/>
            <person name="Schutz G."/>
        </authorList>
    </citation>
    <scope>NUCLEOTIDE SEQUENCE [MRNA]</scope>
</reference>
<reference key="4">
    <citation type="journal article" date="2005" name="Science">
        <title>The transcriptional landscape of the mammalian genome.</title>
        <authorList>
            <person name="Carninci P."/>
            <person name="Kasukawa T."/>
            <person name="Katayama S."/>
            <person name="Gough J."/>
            <person name="Frith M.C."/>
            <person name="Maeda N."/>
            <person name="Oyama R."/>
            <person name="Ravasi T."/>
            <person name="Lenhard B."/>
            <person name="Wells C."/>
            <person name="Kodzius R."/>
            <person name="Shimokawa K."/>
            <person name="Bajic V.B."/>
            <person name="Brenner S.E."/>
            <person name="Batalov S."/>
            <person name="Forrest A.R."/>
            <person name="Zavolan M."/>
            <person name="Davis M.J."/>
            <person name="Wilming L.G."/>
            <person name="Aidinis V."/>
            <person name="Allen J.E."/>
            <person name="Ambesi-Impiombato A."/>
            <person name="Apweiler R."/>
            <person name="Aturaliya R.N."/>
            <person name="Bailey T.L."/>
            <person name="Bansal M."/>
            <person name="Baxter L."/>
            <person name="Beisel K.W."/>
            <person name="Bersano T."/>
            <person name="Bono H."/>
            <person name="Chalk A.M."/>
            <person name="Chiu K.P."/>
            <person name="Choudhary V."/>
            <person name="Christoffels A."/>
            <person name="Clutterbuck D.R."/>
            <person name="Crowe M.L."/>
            <person name="Dalla E."/>
            <person name="Dalrymple B.P."/>
            <person name="de Bono B."/>
            <person name="Della Gatta G."/>
            <person name="di Bernardo D."/>
            <person name="Down T."/>
            <person name="Engstrom P."/>
            <person name="Fagiolini M."/>
            <person name="Faulkner G."/>
            <person name="Fletcher C.F."/>
            <person name="Fukushima T."/>
            <person name="Furuno M."/>
            <person name="Futaki S."/>
            <person name="Gariboldi M."/>
            <person name="Georgii-Hemming P."/>
            <person name="Gingeras T.R."/>
            <person name="Gojobori T."/>
            <person name="Green R.E."/>
            <person name="Gustincich S."/>
            <person name="Harbers M."/>
            <person name="Hayashi Y."/>
            <person name="Hensch T.K."/>
            <person name="Hirokawa N."/>
            <person name="Hill D."/>
            <person name="Huminiecki L."/>
            <person name="Iacono M."/>
            <person name="Ikeo K."/>
            <person name="Iwama A."/>
            <person name="Ishikawa T."/>
            <person name="Jakt M."/>
            <person name="Kanapin A."/>
            <person name="Katoh M."/>
            <person name="Kawasawa Y."/>
            <person name="Kelso J."/>
            <person name="Kitamura H."/>
            <person name="Kitano H."/>
            <person name="Kollias G."/>
            <person name="Krishnan S.P."/>
            <person name="Kruger A."/>
            <person name="Kummerfeld S.K."/>
            <person name="Kurochkin I.V."/>
            <person name="Lareau L.F."/>
            <person name="Lazarevic D."/>
            <person name="Lipovich L."/>
            <person name="Liu J."/>
            <person name="Liuni S."/>
            <person name="McWilliam S."/>
            <person name="Madan Babu M."/>
            <person name="Madera M."/>
            <person name="Marchionni L."/>
            <person name="Matsuda H."/>
            <person name="Matsuzawa S."/>
            <person name="Miki H."/>
            <person name="Mignone F."/>
            <person name="Miyake S."/>
            <person name="Morris K."/>
            <person name="Mottagui-Tabar S."/>
            <person name="Mulder N."/>
            <person name="Nakano N."/>
            <person name="Nakauchi H."/>
            <person name="Ng P."/>
            <person name="Nilsson R."/>
            <person name="Nishiguchi S."/>
            <person name="Nishikawa S."/>
            <person name="Nori F."/>
            <person name="Ohara O."/>
            <person name="Okazaki Y."/>
            <person name="Orlando V."/>
            <person name="Pang K.C."/>
            <person name="Pavan W.J."/>
            <person name="Pavesi G."/>
            <person name="Pesole G."/>
            <person name="Petrovsky N."/>
            <person name="Piazza S."/>
            <person name="Reed J."/>
            <person name="Reid J.F."/>
            <person name="Ring B.Z."/>
            <person name="Ringwald M."/>
            <person name="Rost B."/>
            <person name="Ruan Y."/>
            <person name="Salzberg S.L."/>
            <person name="Sandelin A."/>
            <person name="Schneider C."/>
            <person name="Schoenbach C."/>
            <person name="Sekiguchi K."/>
            <person name="Semple C.A."/>
            <person name="Seno S."/>
            <person name="Sessa L."/>
            <person name="Sheng Y."/>
            <person name="Shibata Y."/>
            <person name="Shimada H."/>
            <person name="Shimada K."/>
            <person name="Silva D."/>
            <person name="Sinclair B."/>
            <person name="Sperling S."/>
            <person name="Stupka E."/>
            <person name="Sugiura K."/>
            <person name="Sultana R."/>
            <person name="Takenaka Y."/>
            <person name="Taki K."/>
            <person name="Tammoja K."/>
            <person name="Tan S.L."/>
            <person name="Tang S."/>
            <person name="Taylor M.S."/>
            <person name="Tegner J."/>
            <person name="Teichmann S.A."/>
            <person name="Ueda H.R."/>
            <person name="van Nimwegen E."/>
            <person name="Verardo R."/>
            <person name="Wei C.L."/>
            <person name="Yagi K."/>
            <person name="Yamanishi H."/>
            <person name="Zabarovsky E."/>
            <person name="Zhu S."/>
            <person name="Zimmer A."/>
            <person name="Hide W."/>
            <person name="Bult C."/>
            <person name="Grimmond S.M."/>
            <person name="Teasdale R.D."/>
            <person name="Liu E.T."/>
            <person name="Brusic V."/>
            <person name="Quackenbush J."/>
            <person name="Wahlestedt C."/>
            <person name="Mattick J.S."/>
            <person name="Hume D.A."/>
            <person name="Kai C."/>
            <person name="Sasaki D."/>
            <person name="Tomaru Y."/>
            <person name="Fukuda S."/>
            <person name="Kanamori-Katayama M."/>
            <person name="Suzuki M."/>
            <person name="Aoki J."/>
            <person name="Arakawa T."/>
            <person name="Iida J."/>
            <person name="Imamura K."/>
            <person name="Itoh M."/>
            <person name="Kato T."/>
            <person name="Kawaji H."/>
            <person name="Kawagashira N."/>
            <person name="Kawashima T."/>
            <person name="Kojima M."/>
            <person name="Kondo S."/>
            <person name="Konno H."/>
            <person name="Nakano K."/>
            <person name="Ninomiya N."/>
            <person name="Nishio T."/>
            <person name="Okada M."/>
            <person name="Plessy C."/>
            <person name="Shibata K."/>
            <person name="Shiraki T."/>
            <person name="Suzuki S."/>
            <person name="Tagami M."/>
            <person name="Waki K."/>
            <person name="Watahiki A."/>
            <person name="Okamura-Oho Y."/>
            <person name="Suzuki H."/>
            <person name="Kawai J."/>
            <person name="Hayashizaki Y."/>
        </authorList>
    </citation>
    <scope>NUCLEOTIDE SEQUENCE [LARGE SCALE MRNA]</scope>
    <source>
        <strain>C57BL/6J</strain>
        <tissue>Spleen</tissue>
        <tissue>Visual cortex</tissue>
    </source>
</reference>
<reference key="5">
    <citation type="journal article" date="2004" name="Genome Res.">
        <title>The status, quality, and expansion of the NIH full-length cDNA project: the Mammalian Gene Collection (MGC).</title>
        <authorList>
            <consortium name="The MGC Project Team"/>
        </authorList>
    </citation>
    <scope>NUCLEOTIDE SEQUENCE [LARGE SCALE MRNA]</scope>
    <source>
        <strain>FVB/N</strain>
        <tissue>Kidney</tissue>
    </source>
</reference>
<reference key="6">
    <citation type="journal article" date="2001" name="Proc. Natl. Acad. Sci. U.S.A.">
        <title>Point mutations in the murine fumarylacetoacetate hydrolase gene: animal models for the human genetic disorder hereditary tyrosinemia type 1.</title>
        <authorList>
            <person name="Aponte J.L."/>
            <person name="Sega G.A."/>
            <person name="Hauser L.J."/>
            <person name="Dhar M.S."/>
            <person name="Withrow C.M."/>
            <person name="Carpenter D.A."/>
            <person name="Rinchik E.M."/>
            <person name="Culiat C.T."/>
            <person name="Johnson D.K."/>
        </authorList>
    </citation>
    <scope>MUTAGENESIS OF GLU-201</scope>
    <scope>CATALYTIC ACTIVITY</scope>
</reference>
<reference key="7">
    <citation type="journal article" date="2010" name="Cell">
        <title>A tissue-specific atlas of mouse protein phosphorylation and expression.</title>
        <authorList>
            <person name="Huttlin E.L."/>
            <person name="Jedrychowski M.P."/>
            <person name="Elias J.E."/>
            <person name="Goswami T."/>
            <person name="Rad R."/>
            <person name="Beausoleil S.A."/>
            <person name="Villen J."/>
            <person name="Haas W."/>
            <person name="Sowa M.E."/>
            <person name="Gygi S.P."/>
        </authorList>
    </citation>
    <scope>PHOSPHORYLATION [LARGE SCALE ANALYSIS] AT SER-84 AND SER-92</scope>
    <scope>IDENTIFICATION BY MASS SPECTROMETRY [LARGE SCALE ANALYSIS]</scope>
    <source>
        <tissue>Brain</tissue>
        <tissue>Brown adipose tissue</tissue>
        <tissue>Heart</tissue>
        <tissue>Kidney</tissue>
        <tissue>Liver</tissue>
        <tissue>Lung</tissue>
        <tissue>Pancreas</tissue>
        <tissue>Spleen</tissue>
        <tissue>Testis</tissue>
    </source>
</reference>
<reference key="8">
    <citation type="journal article" date="1999" name="Structure">
        <title>Crystal structure and mechanism of a carbon-carbon bond hydrolase.</title>
        <authorList>
            <person name="Timm D.E."/>
            <person name="Mueller H.A."/>
            <person name="Bhanumoorthy P."/>
            <person name="Harp J.M."/>
            <person name="Bunick G.J."/>
        </authorList>
    </citation>
    <scope>X-RAY CRYSTALLOGRAPHY (1.9 ANGSTROMS) IN COMPLEX WITH PRODUCTS AND CALCIUM</scope>
    <scope>COFACTOR</scope>
    <scope>ACTIVE SITE</scope>
    <scope>SUBUNIT</scope>
</reference>
<reference key="9">
    <citation type="journal article" date="2001" name="J. Biol. Chem.">
        <title>Mechanistic inferences from the crystal structure of fumarylacetoacetate hydrolase with a bound phosphorus-based inhibitor.</title>
        <authorList>
            <person name="Bateman R.L."/>
            <person name="Bhanumoorthy P."/>
            <person name="Witte J.F."/>
            <person name="McClard R.W."/>
            <person name="Grompe M."/>
            <person name="Timm D.E."/>
        </authorList>
    </citation>
    <scope>X-RAY CRYSTALLOGRAPHY (1.3 ANGSTROMS) IN COMPLEX WITH INHIBITOR; CALCIUM AND MAGNESIUM</scope>
    <scope>SUBUNIT</scope>
    <scope>CATALYTIC ACTIVITY</scope>
    <scope>COFACTOR</scope>
</reference>
<evidence type="ECO:0000250" key="1">
    <source>
        <dbReference type="UniProtKB" id="P16930"/>
    </source>
</evidence>
<evidence type="ECO:0000250" key="2">
    <source>
        <dbReference type="UniProtKB" id="P25093"/>
    </source>
</evidence>
<evidence type="ECO:0000269" key="3">
    <source>
    </source>
</evidence>
<evidence type="ECO:0000269" key="4">
    <source>
    </source>
</evidence>
<evidence type="ECO:0000269" key="5">
    <source>
    </source>
</evidence>
<evidence type="ECO:0000305" key="6"/>
<evidence type="ECO:0000305" key="7">
    <source>
    </source>
</evidence>
<evidence type="ECO:0007744" key="8">
    <source>
    </source>
</evidence>
<evidence type="ECO:0007829" key="9">
    <source>
        <dbReference type="PDB" id="1HYO"/>
    </source>
</evidence>
<evidence type="ECO:0007829" key="10">
    <source>
        <dbReference type="PDB" id="1QCN"/>
    </source>
</evidence>
<evidence type="ECO:0007829" key="11">
    <source>
        <dbReference type="PDB" id="1QQJ"/>
    </source>
</evidence>
<evidence type="ECO:0007829" key="12">
    <source>
        <dbReference type="PDB" id="2HZY"/>
    </source>
</evidence>
<organism>
    <name type="scientific">Mus musculus</name>
    <name type="common">Mouse</name>
    <dbReference type="NCBI Taxonomy" id="10090"/>
    <lineage>
        <taxon>Eukaryota</taxon>
        <taxon>Metazoa</taxon>
        <taxon>Chordata</taxon>
        <taxon>Craniata</taxon>
        <taxon>Vertebrata</taxon>
        <taxon>Euteleostomi</taxon>
        <taxon>Mammalia</taxon>
        <taxon>Eutheria</taxon>
        <taxon>Euarchontoglires</taxon>
        <taxon>Glires</taxon>
        <taxon>Rodentia</taxon>
        <taxon>Myomorpha</taxon>
        <taxon>Muroidea</taxon>
        <taxon>Muridae</taxon>
        <taxon>Murinae</taxon>
        <taxon>Mus</taxon>
        <taxon>Mus</taxon>
    </lineage>
</organism>
<protein>
    <recommendedName>
        <fullName>Fumarylacetoacetase</fullName>
        <shortName>FAA</shortName>
        <ecNumber evidence="4 5">3.7.1.2</ecNumber>
    </recommendedName>
    <alternativeName>
        <fullName>Beta-diketonase</fullName>
    </alternativeName>
    <alternativeName>
        <fullName>Fumarylacetoacetate hydrolase</fullName>
    </alternativeName>
</protein>
<sequence>MSFIPVAEDSDFPIQNLPYGVFSTQSNPKPRIGVAIGDQILDLSVIKHLFTGPALSKHQHVFDETTLNNFMGLGQAAWKEARASLQNLLSASQARLRDDKELRQRAFTSQASATMHLPATIGDYTDFYSSRQHATNVGIMFRGKENALLPNWLHLPVGYHGRASSIVVSGTPIRRPMGQMRPDNSKPPVYGACRLLDMELEMAFFVGPGNRFGEPIPISKAHEHIFGMVLMNDWSARDIQQWEYVPLGPFLGKSFGTTISPWVVPMDALMPFVVPNPKQDPKPLPYLCHSQPYTFDINLSVSLKGEGMSQAATICRSNFKHMYWTMLQQLTHHSVNGCNLRPGDLLASGTISGSDPESFGSMLELSWKGTKAIDVEQGQTRTFLLDGDEVIITGHCQGDGYRVGFGQCAGKVLPALSPA</sequence>
<keyword id="KW-0002">3D-structure</keyword>
<keyword id="KW-0007">Acetylation</keyword>
<keyword id="KW-0106">Calcium</keyword>
<keyword id="KW-0378">Hydrolase</keyword>
<keyword id="KW-0443">Lipid metabolism</keyword>
<keyword id="KW-0460">Magnesium</keyword>
<keyword id="KW-0479">Metal-binding</keyword>
<keyword id="KW-0585">Phenylalanine catabolism</keyword>
<keyword id="KW-0597">Phosphoprotein</keyword>
<keyword id="KW-1185">Reference proteome</keyword>
<keyword id="KW-0828">Tyrosine catabolism</keyword>
<dbReference type="EC" id="3.7.1.2" evidence="4 5"/>
<dbReference type="EMBL" id="M84145">
    <property type="protein sequence ID" value="AAA37591.1"/>
    <property type="molecule type" value="mRNA"/>
</dbReference>
<dbReference type="EMBL" id="Z11774">
    <property type="protein sequence ID" value="CAA77819.1"/>
    <property type="molecule type" value="mRNA"/>
</dbReference>
<dbReference type="EMBL" id="AK143759">
    <property type="protein sequence ID" value="BAE25527.1"/>
    <property type="molecule type" value="mRNA"/>
</dbReference>
<dbReference type="EMBL" id="AK158808">
    <property type="protein sequence ID" value="BAE34676.1"/>
    <property type="molecule type" value="mRNA"/>
</dbReference>
<dbReference type="EMBL" id="BC010767">
    <property type="protein sequence ID" value="AAH10767.1"/>
    <property type="molecule type" value="mRNA"/>
</dbReference>
<dbReference type="CCDS" id="CCDS21418.1"/>
<dbReference type="PIR" id="A40219">
    <property type="entry name" value="A40219"/>
</dbReference>
<dbReference type="PIR" id="A56825">
    <property type="entry name" value="A56825"/>
</dbReference>
<dbReference type="RefSeq" id="NP_034306.2">
    <property type="nucleotide sequence ID" value="NM_010176.4"/>
</dbReference>
<dbReference type="PDB" id="1HYO">
    <property type="method" value="X-ray"/>
    <property type="resolution" value="1.30 A"/>
    <property type="chains" value="A/B=1-419"/>
</dbReference>
<dbReference type="PDB" id="1QCN">
    <property type="method" value="X-ray"/>
    <property type="resolution" value="1.90 A"/>
    <property type="chains" value="A/B=1-419"/>
</dbReference>
<dbReference type="PDB" id="1QCO">
    <property type="method" value="X-ray"/>
    <property type="resolution" value="1.90 A"/>
    <property type="chains" value="A/B=1-419"/>
</dbReference>
<dbReference type="PDB" id="1QQJ">
    <property type="method" value="X-ray"/>
    <property type="resolution" value="1.55 A"/>
    <property type="chains" value="A/B=1-419"/>
</dbReference>
<dbReference type="PDB" id="2HZY">
    <property type="method" value="X-ray"/>
    <property type="resolution" value="1.35 A"/>
    <property type="chains" value="A/B=1-419"/>
</dbReference>
<dbReference type="PDBsum" id="1HYO"/>
<dbReference type="PDBsum" id="1QCN"/>
<dbReference type="PDBsum" id="1QCO"/>
<dbReference type="PDBsum" id="1QQJ"/>
<dbReference type="PDBsum" id="2HZY"/>
<dbReference type="SMR" id="P35505"/>
<dbReference type="BioGRID" id="199589">
    <property type="interactions" value="1"/>
</dbReference>
<dbReference type="FunCoup" id="P35505">
    <property type="interactions" value="779"/>
</dbReference>
<dbReference type="IntAct" id="P35505">
    <property type="interactions" value="1"/>
</dbReference>
<dbReference type="STRING" id="10090.ENSMUSP00000032865"/>
<dbReference type="GlyGen" id="P35505">
    <property type="glycosylation" value="1 site, 1 O-linked glycan (1 site)"/>
</dbReference>
<dbReference type="iPTMnet" id="P35505"/>
<dbReference type="PhosphoSitePlus" id="P35505"/>
<dbReference type="SwissPalm" id="P35505"/>
<dbReference type="CPTAC" id="non-CPTAC-3643"/>
<dbReference type="CPTAC" id="non-CPTAC-3803"/>
<dbReference type="jPOST" id="P35505"/>
<dbReference type="PaxDb" id="10090-ENSMUSP00000032865"/>
<dbReference type="PeptideAtlas" id="P35505"/>
<dbReference type="ProteomicsDB" id="267702"/>
<dbReference type="Pumba" id="P35505"/>
<dbReference type="Antibodypedia" id="27851">
    <property type="antibodies" value="304 antibodies from 29 providers"/>
</dbReference>
<dbReference type="DNASU" id="14085"/>
<dbReference type="Ensembl" id="ENSMUST00000032865.17">
    <property type="protein sequence ID" value="ENSMUSP00000032865.9"/>
    <property type="gene ID" value="ENSMUSG00000030630.17"/>
</dbReference>
<dbReference type="GeneID" id="14085"/>
<dbReference type="KEGG" id="mmu:14085"/>
<dbReference type="UCSC" id="uc009iej.3">
    <property type="organism name" value="mouse"/>
</dbReference>
<dbReference type="AGR" id="MGI:95482"/>
<dbReference type="CTD" id="2184"/>
<dbReference type="MGI" id="MGI:95482">
    <property type="gene designation" value="Fah"/>
</dbReference>
<dbReference type="VEuPathDB" id="HostDB:ENSMUSG00000030630"/>
<dbReference type="eggNOG" id="KOG2843">
    <property type="taxonomic scope" value="Eukaryota"/>
</dbReference>
<dbReference type="GeneTree" id="ENSGT00390000008646"/>
<dbReference type="HOGENOM" id="CLU_026207_2_0_1"/>
<dbReference type="InParanoid" id="P35505"/>
<dbReference type="OMA" id="YWTAAQQ"/>
<dbReference type="OrthoDB" id="9971669at2759"/>
<dbReference type="PhylomeDB" id="P35505"/>
<dbReference type="TreeFam" id="TF315211"/>
<dbReference type="BRENDA" id="3.7.1.2">
    <property type="organism ID" value="3474"/>
</dbReference>
<dbReference type="Reactome" id="R-MMU-8963684">
    <property type="pathway name" value="Tyrosine catabolism"/>
</dbReference>
<dbReference type="UniPathway" id="UPA00139">
    <property type="reaction ID" value="UER00341"/>
</dbReference>
<dbReference type="BioGRID-ORCS" id="14085">
    <property type="hits" value="0 hits in 77 CRISPR screens"/>
</dbReference>
<dbReference type="ChiTaRS" id="Fah">
    <property type="organism name" value="mouse"/>
</dbReference>
<dbReference type="EvolutionaryTrace" id="P35505"/>
<dbReference type="PRO" id="PR:P35505"/>
<dbReference type="Proteomes" id="UP000000589">
    <property type="component" value="Chromosome 7"/>
</dbReference>
<dbReference type="RNAct" id="P35505">
    <property type="molecule type" value="protein"/>
</dbReference>
<dbReference type="Bgee" id="ENSMUSG00000030630">
    <property type="expression patterns" value="Expressed in left lobe of liver and 238 other cell types or tissues"/>
</dbReference>
<dbReference type="ExpressionAtlas" id="P35505">
    <property type="expression patterns" value="baseline and differential"/>
</dbReference>
<dbReference type="GO" id="GO:0004334">
    <property type="term" value="F:fumarylacetoacetase activity"/>
    <property type="evidence" value="ECO:0000315"/>
    <property type="project" value="MGI"/>
</dbReference>
<dbReference type="GO" id="GO:0046872">
    <property type="term" value="F:metal ion binding"/>
    <property type="evidence" value="ECO:0007669"/>
    <property type="project" value="UniProtKB-KW"/>
</dbReference>
<dbReference type="GO" id="GO:0006527">
    <property type="term" value="P:arginine catabolic process"/>
    <property type="evidence" value="ECO:0000315"/>
    <property type="project" value="MGI"/>
</dbReference>
<dbReference type="GO" id="GO:0006559">
    <property type="term" value="P:L-phenylalanine catabolic process"/>
    <property type="evidence" value="ECO:0007669"/>
    <property type="project" value="UniProtKB-UniPathway"/>
</dbReference>
<dbReference type="GO" id="GO:0006629">
    <property type="term" value="P:lipid metabolic process"/>
    <property type="evidence" value="ECO:0007669"/>
    <property type="project" value="UniProtKB-KW"/>
</dbReference>
<dbReference type="GO" id="GO:0006572">
    <property type="term" value="P:tyrosine catabolic process"/>
    <property type="evidence" value="ECO:0007669"/>
    <property type="project" value="UniProtKB-KW"/>
</dbReference>
<dbReference type="FunFam" id="2.30.30.230:FF:000001">
    <property type="entry name" value="Fumarylacetoacetase"/>
    <property type="match status" value="1"/>
</dbReference>
<dbReference type="FunFam" id="3.90.850.10:FF:000004">
    <property type="entry name" value="Fumarylacetoacetase"/>
    <property type="match status" value="1"/>
</dbReference>
<dbReference type="Gene3D" id="2.30.30.230">
    <property type="entry name" value="Fumarylacetoacetase, N-terminal domain"/>
    <property type="match status" value="1"/>
</dbReference>
<dbReference type="Gene3D" id="3.90.850.10">
    <property type="entry name" value="Fumarylacetoacetase-like, C-terminal domain"/>
    <property type="match status" value="1"/>
</dbReference>
<dbReference type="InterPro" id="IPR005959">
    <property type="entry name" value="Fumarylacetoacetase"/>
</dbReference>
<dbReference type="InterPro" id="IPR011234">
    <property type="entry name" value="Fumarylacetoacetase-like_C"/>
</dbReference>
<dbReference type="InterPro" id="IPR036663">
    <property type="entry name" value="Fumarylacetoacetase_C_sf"/>
</dbReference>
<dbReference type="InterPro" id="IPR015377">
    <property type="entry name" value="Fumarylacetoacetase_N"/>
</dbReference>
<dbReference type="InterPro" id="IPR036462">
    <property type="entry name" value="Fumarylacetoacetase_N_sf"/>
</dbReference>
<dbReference type="NCBIfam" id="TIGR01266">
    <property type="entry name" value="fum_ac_acetase"/>
    <property type="match status" value="1"/>
</dbReference>
<dbReference type="PANTHER" id="PTHR43069">
    <property type="entry name" value="FUMARYLACETOACETASE"/>
    <property type="match status" value="1"/>
</dbReference>
<dbReference type="PANTHER" id="PTHR43069:SF2">
    <property type="entry name" value="FUMARYLACETOACETASE"/>
    <property type="match status" value="1"/>
</dbReference>
<dbReference type="Pfam" id="PF01557">
    <property type="entry name" value="FAA_hydrolase"/>
    <property type="match status" value="1"/>
</dbReference>
<dbReference type="Pfam" id="PF09298">
    <property type="entry name" value="FAA_hydrolase_N"/>
    <property type="match status" value="1"/>
</dbReference>
<dbReference type="SUPFAM" id="SSF56529">
    <property type="entry name" value="FAH"/>
    <property type="match status" value="1"/>
</dbReference>
<dbReference type="SUPFAM" id="SSF63433">
    <property type="entry name" value="Fumarylacetoacetate hydrolase, FAH, N-terminal domain"/>
    <property type="match status" value="1"/>
</dbReference>
<gene>
    <name type="primary">Fah</name>
</gene>
<proteinExistence type="evidence at protein level"/>
<accession>P35505</accession>
<accession>Q3TY87</accession>
<accession>Q9QW65</accession>
<feature type="initiator methionine" description="Removed" evidence="1">
    <location>
        <position position="1"/>
    </location>
</feature>
<feature type="chain" id="PRO_0000156826" description="Fumarylacetoacetase">
    <location>
        <begin position="2"/>
        <end position="419"/>
    </location>
</feature>
<feature type="active site" description="Proton acceptor" evidence="7">
    <location>
        <position position="133"/>
    </location>
</feature>
<feature type="binding site" evidence="3 4">
    <location>
        <position position="126"/>
    </location>
    <ligand>
        <name>Ca(2+)</name>
        <dbReference type="ChEBI" id="CHEBI:29108"/>
    </ligand>
</feature>
<feature type="binding site" evidence="7">
    <location>
        <position position="128"/>
    </location>
    <ligand>
        <name>substrate</name>
    </ligand>
</feature>
<feature type="binding site" evidence="7">
    <location>
        <position position="142"/>
    </location>
    <ligand>
        <name>substrate</name>
    </ligand>
</feature>
<feature type="binding site" evidence="3 4">
    <location>
        <position position="199"/>
    </location>
    <ligand>
        <name>Ca(2+)</name>
        <dbReference type="ChEBI" id="CHEBI:29108"/>
    </ligand>
</feature>
<feature type="binding site" evidence="3 4">
    <location>
        <position position="201"/>
    </location>
    <ligand>
        <name>Ca(2+)</name>
        <dbReference type="ChEBI" id="CHEBI:29108"/>
    </ligand>
</feature>
<feature type="binding site" evidence="3 4">
    <location>
        <position position="233"/>
    </location>
    <ligand>
        <name>Ca(2+)</name>
        <dbReference type="ChEBI" id="CHEBI:29108"/>
    </ligand>
</feature>
<feature type="binding site" evidence="4">
    <location>
        <position position="233"/>
    </location>
    <ligand>
        <name>Mg(2+)</name>
        <dbReference type="ChEBI" id="CHEBI:18420"/>
    </ligand>
</feature>
<feature type="binding site" evidence="7">
    <location>
        <position position="240"/>
    </location>
    <ligand>
        <name>substrate</name>
    </ligand>
</feature>
<feature type="binding site" evidence="7">
    <location>
        <position position="244"/>
    </location>
    <ligand>
        <name>substrate</name>
    </ligand>
</feature>
<feature type="binding site" evidence="4">
    <location>
        <position position="253"/>
    </location>
    <ligand>
        <name>Mg(2+)</name>
        <dbReference type="ChEBI" id="CHEBI:18420"/>
    </ligand>
</feature>
<feature type="binding site" evidence="4">
    <location>
        <position position="257"/>
    </location>
    <ligand>
        <name>Mg(2+)</name>
        <dbReference type="ChEBI" id="CHEBI:18420"/>
    </ligand>
</feature>
<feature type="binding site" evidence="7">
    <location>
        <position position="350"/>
    </location>
    <ligand>
        <name>substrate</name>
    </ligand>
</feature>
<feature type="modified residue" description="N-acetylserine" evidence="1">
    <location>
        <position position="2"/>
    </location>
</feature>
<feature type="modified residue" description="Phosphoserine" evidence="8">
    <location>
        <position position="84"/>
    </location>
</feature>
<feature type="modified residue" description="Phosphoserine" evidence="8">
    <location>
        <position position="92"/>
    </location>
</feature>
<feature type="modified residue" description="Phosphoserine" evidence="1">
    <location>
        <position position="309"/>
    </location>
</feature>
<feature type="modified residue" description="Phosphoserine" evidence="2">
    <location>
        <position position="417"/>
    </location>
</feature>
<feature type="mutagenesis site" description="Decrease in activity." evidence="5">
    <original>E</original>
    <variation>G</variation>
    <location>
        <position position="201"/>
    </location>
</feature>
<feature type="sequence conflict" description="In Ref. 2; CAA77819." evidence="6" ref="2">
    <original>SS</original>
    <variation>PF</variation>
    <location>
        <begin position="129"/>
        <end position="130"/>
    </location>
</feature>
<feature type="sequence conflict" description="In Ref. 3; no nucleotide entry." evidence="6" ref="3">
    <original>G</original>
    <variation>R</variation>
    <location>
        <position position="307"/>
    </location>
</feature>
<feature type="sequence conflict" description="In Ref. 1; AAA37591 and 5; AAH10767." evidence="6" ref="1 5">
    <original>E</original>
    <variation>G</variation>
    <location>
        <position position="376"/>
    </location>
</feature>
<feature type="strand" evidence="11">
    <location>
        <begin position="2"/>
        <end position="4"/>
    </location>
</feature>
<feature type="turn" evidence="9">
    <location>
        <begin position="14"/>
        <end position="16"/>
    </location>
</feature>
<feature type="strand" evidence="9">
    <location>
        <begin position="19"/>
        <end position="23"/>
    </location>
</feature>
<feature type="strand" evidence="9">
    <location>
        <begin position="31"/>
        <end position="36"/>
    </location>
</feature>
<feature type="strand" evidence="9">
    <location>
        <begin position="39"/>
        <end position="42"/>
    </location>
</feature>
<feature type="turn" evidence="9">
    <location>
        <begin position="43"/>
        <end position="46"/>
    </location>
</feature>
<feature type="helix" evidence="9">
    <location>
        <begin position="47"/>
        <end position="49"/>
    </location>
</feature>
<feature type="turn" evidence="9">
    <location>
        <begin position="53"/>
        <end position="57"/>
    </location>
</feature>
<feature type="helix" evidence="9">
    <location>
        <begin position="59"/>
        <end position="63"/>
    </location>
</feature>
<feature type="strand" evidence="9">
    <location>
        <begin position="64"/>
        <end position="67"/>
    </location>
</feature>
<feature type="helix" evidence="9">
    <location>
        <begin position="68"/>
        <end position="73"/>
    </location>
</feature>
<feature type="helix" evidence="9">
    <location>
        <begin position="75"/>
        <end position="89"/>
    </location>
</feature>
<feature type="turn" evidence="10">
    <location>
        <begin position="90"/>
        <end position="94"/>
    </location>
</feature>
<feature type="helix" evidence="9">
    <location>
        <begin position="95"/>
        <end position="98"/>
    </location>
</feature>
<feature type="helix" evidence="9">
    <location>
        <begin position="100"/>
        <end position="106"/>
    </location>
</feature>
<feature type="strand" evidence="9">
    <location>
        <begin position="107"/>
        <end position="110"/>
    </location>
</feature>
<feature type="strand" evidence="9">
    <location>
        <begin position="114"/>
        <end position="116"/>
    </location>
</feature>
<feature type="strand" evidence="9">
    <location>
        <begin position="124"/>
        <end position="127"/>
    </location>
</feature>
<feature type="helix" evidence="9">
    <location>
        <begin position="131"/>
        <end position="142"/>
    </location>
</feature>
<feature type="helix" evidence="9">
    <location>
        <begin position="144"/>
        <end position="146"/>
    </location>
</feature>
<feature type="turn" evidence="9">
    <location>
        <begin position="150"/>
        <end position="154"/>
    </location>
</feature>
<feature type="strand" evidence="9">
    <location>
        <begin position="158"/>
        <end position="160"/>
    </location>
</feature>
<feature type="strand" evidence="9">
    <location>
        <begin position="166"/>
        <end position="168"/>
    </location>
</feature>
<feature type="strand" evidence="9">
    <location>
        <begin position="177"/>
        <end position="180"/>
    </location>
</feature>
<feature type="strand" evidence="9">
    <location>
        <begin position="189"/>
        <end position="192"/>
    </location>
</feature>
<feature type="strand" evidence="9">
    <location>
        <begin position="199"/>
        <end position="206"/>
    </location>
</feature>
<feature type="helix" evidence="9">
    <location>
        <begin position="218"/>
        <end position="221"/>
    </location>
</feature>
<feature type="helix" evidence="9">
    <location>
        <begin position="222"/>
        <end position="224"/>
    </location>
</feature>
<feature type="strand" evidence="9">
    <location>
        <begin position="225"/>
        <end position="232"/>
    </location>
</feature>
<feature type="helix" evidence="9">
    <location>
        <begin position="237"/>
        <end position="243"/>
    </location>
</feature>
<feature type="turn" evidence="9">
    <location>
        <begin position="245"/>
        <end position="247"/>
    </location>
</feature>
<feature type="helix" evidence="9">
    <location>
        <begin position="251"/>
        <end position="254"/>
    </location>
</feature>
<feature type="strand" evidence="9">
    <location>
        <begin position="257"/>
        <end position="259"/>
    </location>
</feature>
<feature type="strand" evidence="9">
    <location>
        <begin position="263"/>
        <end position="265"/>
    </location>
</feature>
<feature type="helix" evidence="9">
    <location>
        <begin position="266"/>
        <end position="269"/>
    </location>
</feature>
<feature type="helix" evidence="9">
    <location>
        <begin position="270"/>
        <end position="272"/>
    </location>
</feature>
<feature type="helix" evidence="9">
    <location>
        <begin position="285"/>
        <end position="287"/>
    </location>
</feature>
<feature type="strand" evidence="9">
    <location>
        <begin position="298"/>
        <end position="304"/>
    </location>
</feature>
<feature type="strand" evidence="9">
    <location>
        <begin position="312"/>
        <end position="318"/>
    </location>
</feature>
<feature type="helix" evidence="12">
    <location>
        <begin position="319"/>
        <end position="321"/>
    </location>
</feature>
<feature type="helix" evidence="9">
    <location>
        <begin position="326"/>
        <end position="334"/>
    </location>
</feature>
<feature type="strand" evidence="9">
    <location>
        <begin position="345"/>
        <end position="347"/>
    </location>
</feature>
<feature type="helix" evidence="9">
    <location>
        <begin position="356"/>
        <end position="358"/>
    </location>
</feature>
<feature type="helix" evidence="9">
    <location>
        <begin position="362"/>
        <end position="365"/>
    </location>
</feature>
<feature type="turn" evidence="9">
    <location>
        <begin position="366"/>
        <end position="370"/>
    </location>
</feature>
<feature type="strand" evidence="12">
    <location>
        <begin position="373"/>
        <end position="376"/>
    </location>
</feature>
<feature type="strand" evidence="9">
    <location>
        <begin position="380"/>
        <end position="383"/>
    </location>
</feature>
<feature type="strand" evidence="9">
    <location>
        <begin position="389"/>
        <end position="397"/>
    </location>
</feature>
<feature type="strand" evidence="9">
    <location>
        <begin position="402"/>
        <end position="413"/>
    </location>
</feature>
<comment type="catalytic activity">
    <reaction evidence="4 5">
        <text>4-fumarylacetoacetate + H2O = acetoacetate + fumarate + H(+)</text>
        <dbReference type="Rhea" id="RHEA:10244"/>
        <dbReference type="ChEBI" id="CHEBI:13705"/>
        <dbReference type="ChEBI" id="CHEBI:15377"/>
        <dbReference type="ChEBI" id="CHEBI:15378"/>
        <dbReference type="ChEBI" id="CHEBI:18034"/>
        <dbReference type="ChEBI" id="CHEBI:29806"/>
        <dbReference type="EC" id="3.7.1.2"/>
    </reaction>
</comment>
<comment type="cofactor">
    <cofactor evidence="4 7">
        <name>Ca(2+)</name>
        <dbReference type="ChEBI" id="CHEBI:29108"/>
    </cofactor>
</comment>
<comment type="cofactor">
    <cofactor evidence="4">
        <name>Mg(2+)</name>
        <dbReference type="ChEBI" id="CHEBI:18420"/>
    </cofactor>
</comment>
<comment type="pathway">
    <text>Amino-acid degradation; L-phenylalanine degradation; acetoacetate and fumarate from L-phenylalanine: step 6/6.</text>
</comment>
<comment type="subunit">
    <text evidence="3 4">Homodimer.</text>
</comment>
<comment type="tissue specificity">
    <text>Mainly in liver and kidney.</text>
</comment>
<comment type="similarity">
    <text evidence="6">Belongs to the FAH family.</text>
</comment>